<feature type="chain" id="PRO_0000269948" description="Macrolide export ATP-binding/permease protein MacB">
    <location>
        <begin position="1"/>
        <end position="644"/>
    </location>
</feature>
<feature type="transmembrane region" description="Helical" evidence="1">
    <location>
        <begin position="270"/>
        <end position="290"/>
    </location>
</feature>
<feature type="transmembrane region" description="Helical" evidence="1">
    <location>
        <begin position="524"/>
        <end position="544"/>
    </location>
</feature>
<feature type="transmembrane region" description="Helical" evidence="1">
    <location>
        <begin position="574"/>
        <end position="594"/>
    </location>
</feature>
<feature type="transmembrane region" description="Helical" evidence="1">
    <location>
        <begin position="607"/>
        <end position="627"/>
    </location>
</feature>
<feature type="domain" description="ABC transporter" evidence="1">
    <location>
        <begin position="4"/>
        <end position="242"/>
    </location>
</feature>
<feature type="binding site" evidence="1">
    <location>
        <begin position="40"/>
        <end position="47"/>
    </location>
    <ligand>
        <name>ATP</name>
        <dbReference type="ChEBI" id="CHEBI:30616"/>
    </ligand>
</feature>
<comment type="function">
    <text evidence="1">Non-canonical ABC transporter that contains transmembrane domains (TMD), which form a pore in the inner membrane, and an ATP-binding domain (NBD), which is responsible for energy generation. Confers resistance against macrolides.</text>
</comment>
<comment type="subunit">
    <text evidence="1">Homodimer.</text>
</comment>
<comment type="subcellular location">
    <subcellularLocation>
        <location evidence="1">Cell inner membrane</location>
        <topology evidence="1">Multi-pass membrane protein</topology>
    </subcellularLocation>
</comment>
<comment type="similarity">
    <text evidence="1">Belongs to the ABC transporter superfamily. Macrolide exporter (TC 3.A.1.122) family.</text>
</comment>
<protein>
    <recommendedName>
        <fullName evidence="1">Macrolide export ATP-binding/permease protein MacB</fullName>
        <ecNumber evidence="1">7.6.2.-</ecNumber>
    </recommendedName>
</protein>
<proteinExistence type="inferred from homology"/>
<evidence type="ECO:0000255" key="1">
    <source>
        <dbReference type="HAMAP-Rule" id="MF_01720"/>
    </source>
</evidence>
<keyword id="KW-0046">Antibiotic resistance</keyword>
<keyword id="KW-0067">ATP-binding</keyword>
<keyword id="KW-0997">Cell inner membrane</keyword>
<keyword id="KW-1003">Cell membrane</keyword>
<keyword id="KW-0472">Membrane</keyword>
<keyword id="KW-0547">Nucleotide-binding</keyword>
<keyword id="KW-1185">Reference proteome</keyword>
<keyword id="KW-1278">Translocase</keyword>
<keyword id="KW-0812">Transmembrane</keyword>
<keyword id="KW-1133">Transmembrane helix</keyword>
<keyword id="KW-0813">Transport</keyword>
<organism>
    <name type="scientific">Neisseria gonorrhoeae (strain ATCC 700825 / FA 1090)</name>
    <dbReference type="NCBI Taxonomy" id="242231"/>
    <lineage>
        <taxon>Bacteria</taxon>
        <taxon>Pseudomonadati</taxon>
        <taxon>Pseudomonadota</taxon>
        <taxon>Betaproteobacteria</taxon>
        <taxon>Neisseriales</taxon>
        <taxon>Neisseriaceae</taxon>
        <taxon>Neisseria</taxon>
    </lineage>
</organism>
<reference key="1">
    <citation type="submission" date="2003-03" db="EMBL/GenBank/DDBJ databases">
        <title>The complete genome sequence of Neisseria gonorrhoeae.</title>
        <authorList>
            <person name="Lewis L.A."/>
            <person name="Gillaspy A.F."/>
            <person name="McLaughlin R.E."/>
            <person name="Gipson M."/>
            <person name="Ducey T.F."/>
            <person name="Ownbey T."/>
            <person name="Hartman K."/>
            <person name="Nydick C."/>
            <person name="Carson M.B."/>
            <person name="Vaughn J."/>
            <person name="Thomson C."/>
            <person name="Song L."/>
            <person name="Lin S."/>
            <person name="Yuan X."/>
            <person name="Najar F."/>
            <person name="Zhan M."/>
            <person name="Ren Q."/>
            <person name="Zhu H."/>
            <person name="Qi S."/>
            <person name="Kenton S.M."/>
            <person name="Lai H."/>
            <person name="White J.D."/>
            <person name="Clifton S."/>
            <person name="Roe B.A."/>
            <person name="Dyer D.W."/>
        </authorList>
    </citation>
    <scope>NUCLEOTIDE SEQUENCE [LARGE SCALE GENOMIC DNA]</scope>
    <source>
        <strain>ATCC 700825 / FA 1090</strain>
    </source>
</reference>
<sequence length="644" mass="69355">MSLIECKNINRCFGSGENRVHILKDISLSIEKGDFVAIIGQSGSGKSTLMNILGCLDTAGSGSYRIDGIETAKMQPDELAALRRERFGFIFQRYNLLSSLTARDNVALPAVYMGMGGKERSARADKLLQDLGLASKEGNKPGELSGGQQQRVSIARALMNGGEIIFADEPTGALDTASGKNVMEIIRRLHEAGHTVIMVTHDPGIAANANRVIEIRDGEIISDTSKNPEIPASNVGRIREKASWSFYYDQFVEAFRMSVQAVLAHKMRSLLTMLGIIIGIASVVSVVALGNGSQKKILEDISSMGTNTISIFPGRGFGDRRSGKIKTLTIDDAKIIAKQSYVASATPMTSSGGTLTYRNTDLTASLYGVGEQYFDVRGLKLETGRLFDENDVKEDAQVVVIDQNVKDKLFADSDPLGKTILFRKRPLTVIGVMKKDENAFGNSDVLMLWSPYTTVMHQITGESHTNSITVKIKDNANTRVAEKGLAELLKARHGTEDFFMNNSDSIRQMVESTTGTMKLLISSIALISLVVGGIGVMNIMLVSVTERTKEIGIRMAIGARRGNILQQFLIEAVLICIIGGLVGVGLSAAVSLVFNHFVTDFPMDISAASVIGAVACSTGIGIAFGFMPANKAAKLNPIDALAQD</sequence>
<dbReference type="EC" id="7.6.2.-" evidence="1"/>
<dbReference type="EMBL" id="AE004969">
    <property type="protein sequence ID" value="AAW90081.1"/>
    <property type="molecule type" value="Genomic_DNA"/>
</dbReference>
<dbReference type="RefSeq" id="WP_003697391.1">
    <property type="nucleotide sequence ID" value="NC_002946.2"/>
</dbReference>
<dbReference type="RefSeq" id="YP_208493.1">
    <property type="nucleotide sequence ID" value="NC_002946.2"/>
</dbReference>
<dbReference type="SMR" id="Q5F6V6"/>
<dbReference type="STRING" id="242231.NGO_1439"/>
<dbReference type="KEGG" id="ngo:NGO_1439"/>
<dbReference type="PATRIC" id="fig|242231.10.peg.1697"/>
<dbReference type="HOGENOM" id="CLU_000604_78_1_4"/>
<dbReference type="Proteomes" id="UP000000535">
    <property type="component" value="Chromosome"/>
</dbReference>
<dbReference type="GO" id="GO:0005886">
    <property type="term" value="C:plasma membrane"/>
    <property type="evidence" value="ECO:0007669"/>
    <property type="project" value="UniProtKB-SubCell"/>
</dbReference>
<dbReference type="GO" id="GO:0005524">
    <property type="term" value="F:ATP binding"/>
    <property type="evidence" value="ECO:0007669"/>
    <property type="project" value="UniProtKB-KW"/>
</dbReference>
<dbReference type="GO" id="GO:0016887">
    <property type="term" value="F:ATP hydrolysis activity"/>
    <property type="evidence" value="ECO:0007669"/>
    <property type="project" value="InterPro"/>
</dbReference>
<dbReference type="GO" id="GO:0022857">
    <property type="term" value="F:transmembrane transporter activity"/>
    <property type="evidence" value="ECO:0007669"/>
    <property type="project" value="TreeGrafter"/>
</dbReference>
<dbReference type="GO" id="GO:0046677">
    <property type="term" value="P:response to antibiotic"/>
    <property type="evidence" value="ECO:0007669"/>
    <property type="project" value="UniProtKB-KW"/>
</dbReference>
<dbReference type="CDD" id="cd03255">
    <property type="entry name" value="ABC_MJ0796_LolCDE_FtsE"/>
    <property type="match status" value="1"/>
</dbReference>
<dbReference type="FunFam" id="3.40.50.300:FF:000032">
    <property type="entry name" value="Export ABC transporter ATP-binding protein"/>
    <property type="match status" value="1"/>
</dbReference>
<dbReference type="Gene3D" id="3.40.50.300">
    <property type="entry name" value="P-loop containing nucleotide triphosphate hydrolases"/>
    <property type="match status" value="1"/>
</dbReference>
<dbReference type="InterPro" id="IPR003593">
    <property type="entry name" value="AAA+_ATPase"/>
</dbReference>
<dbReference type="InterPro" id="IPR003838">
    <property type="entry name" value="ABC3_permease_C"/>
</dbReference>
<dbReference type="InterPro" id="IPR003439">
    <property type="entry name" value="ABC_transporter-like_ATP-bd"/>
</dbReference>
<dbReference type="InterPro" id="IPR017871">
    <property type="entry name" value="ABC_transporter-like_CS"/>
</dbReference>
<dbReference type="InterPro" id="IPR017911">
    <property type="entry name" value="MacB-like_ATP-bd"/>
</dbReference>
<dbReference type="InterPro" id="IPR025857">
    <property type="entry name" value="MacB_PCD"/>
</dbReference>
<dbReference type="InterPro" id="IPR050250">
    <property type="entry name" value="Macrolide_Exporter_MacB"/>
</dbReference>
<dbReference type="InterPro" id="IPR027417">
    <property type="entry name" value="P-loop_NTPase"/>
</dbReference>
<dbReference type="PANTHER" id="PTHR30572:SF14">
    <property type="entry name" value="MACROLIDE EXPORT ATP-BINDING_PERMEASE PROTEIN MACB"/>
    <property type="match status" value="1"/>
</dbReference>
<dbReference type="PANTHER" id="PTHR30572">
    <property type="entry name" value="MEMBRANE COMPONENT OF TRANSPORTER-RELATED"/>
    <property type="match status" value="1"/>
</dbReference>
<dbReference type="Pfam" id="PF00005">
    <property type="entry name" value="ABC_tran"/>
    <property type="match status" value="1"/>
</dbReference>
<dbReference type="Pfam" id="PF02687">
    <property type="entry name" value="FtsX"/>
    <property type="match status" value="1"/>
</dbReference>
<dbReference type="Pfam" id="PF12704">
    <property type="entry name" value="MacB_PCD"/>
    <property type="match status" value="1"/>
</dbReference>
<dbReference type="SMART" id="SM00382">
    <property type="entry name" value="AAA"/>
    <property type="match status" value="1"/>
</dbReference>
<dbReference type="SUPFAM" id="SSF52540">
    <property type="entry name" value="P-loop containing nucleoside triphosphate hydrolases"/>
    <property type="match status" value="1"/>
</dbReference>
<dbReference type="PROSITE" id="PS00211">
    <property type="entry name" value="ABC_TRANSPORTER_1"/>
    <property type="match status" value="1"/>
</dbReference>
<dbReference type="PROSITE" id="PS50893">
    <property type="entry name" value="ABC_TRANSPORTER_2"/>
    <property type="match status" value="1"/>
</dbReference>
<dbReference type="PROSITE" id="PS51267">
    <property type="entry name" value="MACB"/>
    <property type="match status" value="1"/>
</dbReference>
<gene>
    <name evidence="1" type="primary">macB</name>
    <name type="ordered locus">NGO_1439</name>
</gene>
<accession>Q5F6V6</accession>
<name>MACB_NEIG1</name>